<name>RS28_RABIT</name>
<comment type="function">
    <text evidence="1 4 5 6 7 11">Component of the small ribosomal subunit (PubMed:23873042, PubMed:25601755, PubMed:26245381, PubMed:27863242, PubMed:30517857). The ribosome is a large ribonucleoprotein complex responsible for the synthesis of proteins in the cell. Part of the small subunit (SSU) processome, first precursor of the small eukaryotic ribosomal subunit (PubMed:23873042, PubMed:25601755, PubMed:26245381, PubMed:27863242, PubMed:30517857). During the assembly of the SSU processome in the nucleolus, many ribosome biogenesis factors, an RNA chaperone and ribosomal proteins associate with the nascent pre-rRNA and work in concert to generate RNA folding, modifications, rearrangements and cleavage as well as targeted degradation of pre-ribosomal RNA by the RNA exosome (By similarity).</text>
</comment>
<comment type="subunit">
    <text evidence="4 5 6 7 8 9 10 11 12 13 14 15 16 17 18 19">Component of the 40S small ribosomal subunit (PubMed:23873042, PubMed:25601755, PubMed:26245381, PubMed:27863242, PubMed:29856316, PubMed:30293783, PubMed:30355441, PubMed:30517857, PubMed:31246176, PubMed:31609474, PubMed:31768042, PubMed:32286223, PubMed:33296660, PubMed:35679869, PubMed:35822879, PubMed:36653451). Part of the small subunit (SSU) processome, composed of more than 70 proteins and the RNA chaperone small nucleolar RNA (snoRNA) U3 (PubMed:23873042, PubMed:25601755, PubMed:26245381, PubMed:27863242, PubMed:29856316, PubMed:30293783, PubMed:30355441, PubMed:30517857, PubMed:31246176, PubMed:31609474, PubMed:31768042, PubMed:32286223, PubMed:33296660, PubMed:35679869, PubMed:35822879, PubMed:36653451).</text>
</comment>
<comment type="subcellular location">
    <subcellularLocation>
        <location evidence="1">Cytoplasm</location>
        <location evidence="1">Cytosol</location>
    </subcellularLocation>
    <subcellularLocation>
        <location evidence="4 5 6 7 8 9 10 11 12 13 14 15 16 17 18 19">Cytoplasm</location>
    </subcellularLocation>
    <subcellularLocation>
        <location evidence="3">Rough endoplasmic reticulum</location>
    </subcellularLocation>
    <subcellularLocation>
        <location evidence="1">Nucleus</location>
        <location evidence="1">Nucleolus</location>
    </subcellularLocation>
    <text evidence="1 3">Detected on cytosolic polysomes (By similarity). Detected in ribosomes that are associated with the rough endoplasmic reticulum (By similarity).</text>
</comment>
<comment type="similarity">
    <text evidence="20">Belongs to the eukaryotic ribosomal protein eS28 family.</text>
</comment>
<keyword id="KW-0002">3D-structure</keyword>
<keyword id="KW-0007">Acetylation</keyword>
<keyword id="KW-0963">Cytoplasm</keyword>
<keyword id="KW-0256">Endoplasmic reticulum</keyword>
<keyword id="KW-0539">Nucleus</keyword>
<keyword id="KW-0597">Phosphoprotein</keyword>
<keyword id="KW-1185">Reference proteome</keyword>
<keyword id="KW-0687">Ribonucleoprotein</keyword>
<keyword id="KW-0689">Ribosomal protein</keyword>
<feature type="chain" id="PRO_0000460081" description="Small ribosomal subunit protein eS28">
    <location>
        <begin position="1"/>
        <end position="69"/>
    </location>
</feature>
<feature type="modified residue" description="N-acetylmethionine" evidence="2">
    <location>
        <position position="1"/>
    </location>
</feature>
<feature type="modified residue" description="Phosphoserine" evidence="1">
    <location>
        <position position="41"/>
    </location>
</feature>
<feature type="strand" evidence="50">
    <location>
        <begin position="10"/>
        <end position="25"/>
    </location>
</feature>
<feature type="strand" evidence="50">
    <location>
        <begin position="27"/>
        <end position="37"/>
    </location>
</feature>
<feature type="strand" evidence="50">
    <location>
        <begin position="46"/>
        <end position="48"/>
    </location>
</feature>
<feature type="strand" evidence="50">
    <location>
        <begin position="55"/>
        <end position="59"/>
    </location>
</feature>
<gene>
    <name type="primary">RPS28</name>
</gene>
<proteinExistence type="evidence at protein level"/>
<accession>G1TIB4</accession>
<protein>
    <recommendedName>
        <fullName>Small ribosomal subunit protein eS28</fullName>
    </recommendedName>
    <alternativeName>
        <fullName>40S ribosomal protein S28</fullName>
    </alternativeName>
</protein>
<sequence>MDTSRVQPIKLARVTKVLGRTGSQGQCTQVRVEFMDDTSRSIIRNVKGPVREGDVLTLLESEREARRLR</sequence>
<organism>
    <name type="scientific">Oryctolagus cuniculus</name>
    <name type="common">Rabbit</name>
    <dbReference type="NCBI Taxonomy" id="9986"/>
    <lineage>
        <taxon>Eukaryota</taxon>
        <taxon>Metazoa</taxon>
        <taxon>Chordata</taxon>
        <taxon>Craniata</taxon>
        <taxon>Vertebrata</taxon>
        <taxon>Euteleostomi</taxon>
        <taxon>Mammalia</taxon>
        <taxon>Eutheria</taxon>
        <taxon>Euarchontoglires</taxon>
        <taxon>Glires</taxon>
        <taxon>Lagomorpha</taxon>
        <taxon>Leporidae</taxon>
        <taxon>Oryctolagus</taxon>
    </lineage>
</organism>
<reference key="1">
    <citation type="journal article" date="2011" name="Nature">
        <title>A high-resolution map of human evolutionary constraint using 29 mammals.</title>
        <authorList>
            <person name="Lindblad-Toh K."/>
            <person name="Garber M."/>
            <person name="Zuk O."/>
            <person name="Lin M.F."/>
            <person name="Parker B.J."/>
            <person name="Washietl S."/>
            <person name="Kheradpour P."/>
            <person name="Ernst J."/>
            <person name="Jordan G."/>
            <person name="Mauceli E."/>
            <person name="Ward L.D."/>
            <person name="Lowe C.B."/>
            <person name="Holloway A.K."/>
            <person name="Clamp M."/>
            <person name="Gnerre S."/>
            <person name="Alfoldi J."/>
            <person name="Beal K."/>
            <person name="Chang J."/>
            <person name="Clawson H."/>
            <person name="Cuff J."/>
            <person name="Di Palma F."/>
            <person name="Fitzgerald S."/>
            <person name="Flicek P."/>
            <person name="Guttman M."/>
            <person name="Hubisz M.J."/>
            <person name="Jaffe D.B."/>
            <person name="Jungreis I."/>
            <person name="Kent W.J."/>
            <person name="Kostka D."/>
            <person name="Lara M."/>
            <person name="Martins A.L."/>
            <person name="Massingham T."/>
            <person name="Moltke I."/>
            <person name="Raney B.J."/>
            <person name="Rasmussen M.D."/>
            <person name="Robinson J."/>
            <person name="Stark A."/>
            <person name="Vilella A.J."/>
            <person name="Wen J."/>
            <person name="Xie X."/>
            <person name="Zody M.C."/>
            <person name="Baldwin J."/>
            <person name="Bloom T."/>
            <person name="Chin C.W."/>
            <person name="Heiman D."/>
            <person name="Nicol R."/>
            <person name="Nusbaum C."/>
            <person name="Young S."/>
            <person name="Wilkinson J."/>
            <person name="Worley K.C."/>
            <person name="Kovar C.L."/>
            <person name="Muzny D.M."/>
            <person name="Gibbs R.A."/>
            <person name="Cree A."/>
            <person name="Dihn H.H."/>
            <person name="Fowler G."/>
            <person name="Jhangiani S."/>
            <person name="Joshi V."/>
            <person name="Lee S."/>
            <person name="Lewis L.R."/>
            <person name="Nazareth L.V."/>
            <person name="Okwuonu G."/>
            <person name="Santibanez J."/>
            <person name="Warren W.C."/>
            <person name="Mardis E.R."/>
            <person name="Weinstock G.M."/>
            <person name="Wilson R.K."/>
            <person name="Delehaunty K."/>
            <person name="Dooling D."/>
            <person name="Fronik C."/>
            <person name="Fulton L."/>
            <person name="Fulton B."/>
            <person name="Graves T."/>
            <person name="Minx P."/>
            <person name="Sodergren E."/>
            <person name="Birney E."/>
            <person name="Margulies E.H."/>
            <person name="Herrero J."/>
            <person name="Green E.D."/>
            <person name="Haussler D."/>
            <person name="Siepel A."/>
            <person name="Goldman N."/>
            <person name="Pollard K.S."/>
            <person name="Pedersen J.S."/>
            <person name="Lander E.S."/>
            <person name="Kellis M."/>
        </authorList>
    </citation>
    <scope>NUCLEOTIDE SEQUENCE [LARGE SCALE GENOMIC DNA]</scope>
    <source>
        <strain>Thorbecke</strain>
    </source>
</reference>
<reference evidence="25 26" key="2">
    <citation type="journal article" date="2013" name="Nature">
        <title>The initiation of mammalian protein synthesis and mRNA scanning mechanism.</title>
        <authorList>
            <person name="Lomakin I.B."/>
            <person name="Steitz T.A."/>
        </authorList>
    </citation>
    <scope>X-RAY CRYSTALLOGRAPHY (7.01 ANGSTROMS) OF 40S RIBOSOME</scope>
    <scope>FUNCTION</scope>
    <scope>SUBUNIT</scope>
    <scope>SUBCELLULAR LOCATION</scope>
</reference>
<reference evidence="23 24" key="3">
    <citation type="journal article" date="2015" name="Mol. Cell">
        <title>Cryo-EM of ribosomal 80S complexes with termination factors reveals the translocated cricket paralysis virus IRES.</title>
        <authorList>
            <person name="Muhs M."/>
            <person name="Hilal T."/>
            <person name="Mielke T."/>
            <person name="Skabkin M.A."/>
            <person name="Sanbonmatsu K.Y."/>
            <person name="Pestova T.V."/>
            <person name="Spahn C.M."/>
        </authorList>
    </citation>
    <scope>STRUCTURE BY ELECTRON MICROSCOPY (9.00 ANGSTROMS) OF RIBOSOME</scope>
    <scope>FUNCTION</scope>
    <scope>SUBUNIT</scope>
    <scope>SUBCELLULAR LOCATION</scope>
</reference>
<reference evidence="21 22" key="4">
    <citation type="journal article" date="2015" name="Nature">
        <title>Structural basis for stop codon recognition in eukaryotes.</title>
        <authorList>
            <person name="Brown A."/>
            <person name="Shao S."/>
            <person name="Murray J."/>
            <person name="Hegde R.S."/>
            <person name="Ramakrishnan V."/>
        </authorList>
    </citation>
    <scope>STRUCTURE BY ELECTRON MICROSCOPY (3.45 ANGSTROMS) OF 8-68 OF RIBOSOME</scope>
    <scope>FUNCTION</scope>
    <scope>SUBCELLULAR LOCATION</scope>
    <scope>SUBUNIT</scope>
</reference>
<reference evidence="27 28" key="5">
    <citation type="journal article" date="2016" name="Cell">
        <title>Decoding mammalian ribosome-mRNA states by translational GTPase complexes.</title>
        <authorList>
            <person name="Shao S."/>
            <person name="Murray J."/>
            <person name="Brown A."/>
            <person name="Taunton J."/>
            <person name="Ramakrishnan V."/>
            <person name="Hegde R.S."/>
        </authorList>
    </citation>
    <scope>STRUCTURE BY ELECTRON MICROSCOPY (3.31 ANGSTROMS) OF RIBOSOME</scope>
    <scope>FUNCTION</scope>
    <scope>SUBCELLULAR LOCATION</scope>
    <scope>SUBUNIT</scope>
</reference>
<reference evidence="31" key="6">
    <citation type="journal article" date="2018" name="Cell Rep.">
        <title>tRNA translocation by the eukaryotic 80S ribosome and the impact of GTP hydrolysis.</title>
        <authorList>
            <person name="Flis J."/>
            <person name="Holm M."/>
            <person name="Rundlet E.J."/>
            <person name="Loerke J."/>
            <person name="Hilal T."/>
            <person name="Dabrowski M."/>
            <person name="Burger J."/>
            <person name="Mielke T."/>
            <person name="Blanchard S.C."/>
            <person name="Spahn C.M.T."/>
            <person name="Budkevich T.V."/>
        </authorList>
    </citation>
    <scope>STRUCTURE BY ELECTRON MICROSCOPY (3.60 ANGSTROMS) OF 7-68 OF RIBOSOME</scope>
    <scope>FUNCTION</scope>
    <scope>SUBCELLULAR LOCATION</scope>
    <scope>SUBUNIT</scope>
</reference>
<reference evidence="29 30" key="7">
    <citation type="journal article" date="2018" name="Elife">
        <title>Dual tRNA mimicry in the Cricket paralysis virus IRES uncovers an unexpected similarity with the Hepatitis C Virus IRES.</title>
        <authorList>
            <person name="Pisareva V.P."/>
            <person name="Pisarev A.V."/>
            <person name="Fernandez I.S."/>
        </authorList>
    </citation>
    <scope>STRUCTURE BY ELECTRON MICROSCOPY (3.20 ANGSTROMS) OF RIBOSOME</scope>
    <scope>SUBCELLULAR LOCATION</scope>
    <scope>SUBUNIT</scope>
</reference>
<reference evidence="34 35" key="8">
    <citation type="journal article" date="2018" name="Elife">
        <title>Structures of translationally inactive mammalian ribosomes.</title>
        <authorList>
            <person name="Brown A."/>
            <person name="Baird M.R."/>
            <person name="Yip M.C."/>
            <person name="Murray J."/>
            <person name="Shao S."/>
        </authorList>
    </citation>
    <scope>STRUCTURE BY ELECTRON MICROSCOPY (3.30 ANGSTROMS) OF 7-68 OF RIBOSOME</scope>
    <scope>SUBCELLULAR LOCATION</scope>
    <scope>SUBUNIT</scope>
</reference>
<reference evidence="32 33" key="9">
    <citation type="journal article" date="2018" name="Mol. Cell">
        <title>ZNF598 is a quality control sensor of collided ribosomes.</title>
        <authorList>
            <person name="Juszkiewicz S."/>
            <person name="Chandrasekaran V."/>
            <person name="Lin Z."/>
            <person name="Kraatz S."/>
            <person name="Ramakrishnan V."/>
            <person name="Hegde R.S."/>
        </authorList>
    </citation>
    <scope>STRUCTURE BY ELECTRON MICROSCOPY (3.80 ANGSTROMS) OF RIBOSOME</scope>
    <scope>SUBCELLULAR LOCATION</scope>
    <scope>SUBUNIT</scope>
</reference>
<reference evidence="38 39" key="10">
    <citation type="journal article" date="2019" name="Elife">
        <title>Structural and mutational analysis of the ribosome-arresting human XBP1u.</title>
        <authorList>
            <person name="Shanmuganathan V."/>
            <person name="Schiller N."/>
            <person name="Magoulopoulou A."/>
            <person name="Cheng J."/>
            <person name="Braunger K."/>
            <person name="Cymer F."/>
            <person name="Berninghausen O."/>
            <person name="Beatrix B."/>
            <person name="Kohno K."/>
            <person name="von Heijne G."/>
            <person name="Beckmann R."/>
        </authorList>
    </citation>
    <scope>STRUCTURE BY ELECTRON MICROSCOPY (3.00 ANGSTROMS) OF 7-68 OF RIBOSOME</scope>
    <scope>SUBCELLULAR LOCATION</scope>
    <scope>SUBUNIT</scope>
</reference>
<reference evidence="36 37" key="11">
    <citation type="journal article" date="2019" name="EMBO J.">
        <title>The Israeli acute paralysis virus IRES captures host ribosomes by mimicking a ribosomal state with hybrid tRNAs.</title>
        <authorList>
            <person name="Acosta-Reyes F."/>
            <person name="Neupane R."/>
            <person name="Frank J."/>
            <person name="Fernandez I.S."/>
        </authorList>
    </citation>
    <scope>STRUCTURE BY ELECTRON MICROSCOPY (3.10 ANGSTROMS) OF RIBOSOME</scope>
    <scope>SUBUNIT</scope>
    <scope>SUBCELLULAR LOCATION</scope>
</reference>
<reference evidence="40" key="12">
    <citation type="journal article" date="2019" name="Nat. Struct. Mol. Biol.">
        <title>Mechanism of ribosome stalling during translation of a poly(A) tail.</title>
        <authorList>
            <person name="Chandrasekaran V."/>
            <person name="Juszkiewicz S."/>
            <person name="Choi J."/>
            <person name="Puglisi J.D."/>
            <person name="Brown A."/>
            <person name="Shao S."/>
            <person name="Ramakrishnan V."/>
            <person name="Hegde R.S."/>
        </authorList>
    </citation>
    <scope>STRUCTURE BY ELECTRON MICROSCOPY (2.80 ANGSTROMS) OF RIBOSOME</scope>
    <scope>SUBCELLULAR LOCATION</scope>
    <scope>SUBUNIT</scope>
</reference>
<reference evidence="43 44" key="13">
    <citation type="journal article" date="2020" name="Cell Rep.">
        <title>The Halastavi arva virus intergenic region IRES promotes translation by the simplest possible initiation mechanism.</title>
        <authorList>
            <person name="Abaeva I.S."/>
            <person name="Vicens Q."/>
            <person name="Bochler A."/>
            <person name="Soufari H."/>
            <person name="Simonetti A."/>
            <person name="Pestova T.V."/>
            <person name="Hashem Y."/>
            <person name="Hellen C.U.T."/>
        </authorList>
    </citation>
    <scope>STRUCTURE BY ELECTRON MICROSCOPY (3.49 ANGSTROMS) OF RIBOSOME</scope>
    <scope>SUBCELLULAR LOCATION</scope>
    <scope>SUBUNIT</scope>
</reference>
<reference evidence="41 42" key="14">
    <citation type="journal article" date="2020" name="Elife">
        <title>A complex IRES at the 5'-UTR of a viral mRNA assembles a functional 48S complex via an uAUG intermediate.</title>
        <authorList>
            <person name="Neupane R."/>
            <person name="Pisareva V.P."/>
            <person name="Rodriguez C.F."/>
            <person name="Pisarev A.V."/>
            <person name="Fernandez I.S."/>
        </authorList>
    </citation>
    <scope>STRUCTURE BY ELECTRON MICROSCOPY (3.00 ANGSTROMS) OF RIBOSOME</scope>
    <scope>SUBUNIT</scope>
    <scope>SUBCELLULAR LOCATION</scope>
</reference>
<reference evidence="46 47" key="15">
    <citation type="journal article" date="2022" name="EMBO J.">
        <title>Molecular architecture of 40S translation initiation complexes on the hepatitis C virus IRES.</title>
        <authorList>
            <person name="Brown Z.P."/>
            <person name="Abaeva I.S."/>
            <person name="De S."/>
            <person name="Hellen C.U.T."/>
            <person name="Pestova T.V."/>
            <person name="Frank J."/>
        </authorList>
    </citation>
    <scope>STRUCTURE BY ELECTRON MICROSCOPY (3.50 ANGSTROMS) OF RIBOSOME</scope>
    <scope>SUBCELLULAR LOCATION</scope>
    <scope>SUBUNIT</scope>
</reference>
<reference evidence="48 49" key="16">
    <citation type="journal article" date="2022" name="Mol. Cell">
        <title>Direct epitranscriptomic regulation of mammalian translation initiation through N4-acetylcytidine.</title>
        <authorList>
            <person name="Arango D."/>
            <person name="Sturgill D."/>
            <person name="Yang R."/>
            <person name="Kanai T."/>
            <person name="Bauer P."/>
            <person name="Roy J."/>
            <person name="Wang Z."/>
            <person name="Hosogane M."/>
            <person name="Schiffers S."/>
            <person name="Oberdoerffer S."/>
        </authorList>
    </citation>
    <scope>STRUCTURE BY ELECTRON MICROSCOPY (2.80 ANGSTROMS) OF RIBOSOME</scope>
    <scope>SUBCELLULAR LOCATION</scope>
    <scope>SUBUNIT</scope>
</reference>
<reference evidence="45" key="17">
    <citation type="journal article" date="2023" name="Nature">
        <title>A molecular network of conserved factors keeps ribosomes dormant in the egg.</title>
        <authorList>
            <person name="Leesch F."/>
            <person name="Lorenzo-Orts L."/>
            <person name="Pribitzer C."/>
            <person name="Grishkovskaya I."/>
            <person name="Roehsner J."/>
            <person name="Chugunova A."/>
            <person name="Matzinger M."/>
            <person name="Roitinger E."/>
            <person name="Belacic K."/>
            <person name="Kandolf S."/>
            <person name="Lin T.Y."/>
            <person name="Mechtler K."/>
            <person name="Meinhart A."/>
            <person name="Haselbach D."/>
            <person name="Pauli A."/>
        </authorList>
    </citation>
    <scope>STRUCTURE BY ELECTRON MICROSCOPY (2.30 ANGSTROMS) OF RIBOSOME</scope>
    <scope>SUBCELLULAR LOCATION</scope>
    <scope>SUBUNIT</scope>
</reference>
<evidence type="ECO:0000250" key="1">
    <source>
        <dbReference type="UniProtKB" id="P62857"/>
    </source>
</evidence>
<evidence type="ECO:0000250" key="2">
    <source>
        <dbReference type="UniProtKB" id="P62859"/>
    </source>
</evidence>
<evidence type="ECO:0000250" key="3">
    <source>
        <dbReference type="UniProtKB" id="Q6QAT1"/>
    </source>
</evidence>
<evidence type="ECO:0000269" key="4">
    <source>
    </source>
</evidence>
<evidence type="ECO:0000269" key="5">
    <source>
    </source>
</evidence>
<evidence type="ECO:0000269" key="6">
    <source>
    </source>
</evidence>
<evidence type="ECO:0000269" key="7">
    <source>
    </source>
</evidence>
<evidence type="ECO:0000269" key="8">
    <source>
    </source>
</evidence>
<evidence type="ECO:0000269" key="9">
    <source>
    </source>
</evidence>
<evidence type="ECO:0000269" key="10">
    <source>
    </source>
</evidence>
<evidence type="ECO:0000269" key="11">
    <source>
    </source>
</evidence>
<evidence type="ECO:0000269" key="12">
    <source>
    </source>
</evidence>
<evidence type="ECO:0000269" key="13">
    <source>
    </source>
</evidence>
<evidence type="ECO:0000269" key="14">
    <source>
    </source>
</evidence>
<evidence type="ECO:0000269" key="15">
    <source>
    </source>
</evidence>
<evidence type="ECO:0000269" key="16">
    <source>
    </source>
</evidence>
<evidence type="ECO:0000269" key="17">
    <source>
    </source>
</evidence>
<evidence type="ECO:0000269" key="18">
    <source>
    </source>
</evidence>
<evidence type="ECO:0000269" key="19">
    <source>
    </source>
</evidence>
<evidence type="ECO:0000305" key="20"/>
<evidence type="ECO:0007744" key="21">
    <source>
        <dbReference type="PDB" id="3JAG"/>
    </source>
</evidence>
<evidence type="ECO:0007744" key="22">
    <source>
        <dbReference type="PDB" id="3JAH"/>
    </source>
</evidence>
<evidence type="ECO:0007744" key="23">
    <source>
        <dbReference type="PDB" id="4D5L"/>
    </source>
</evidence>
<evidence type="ECO:0007744" key="24">
    <source>
        <dbReference type="PDB" id="4D61"/>
    </source>
</evidence>
<evidence type="ECO:0007744" key="25">
    <source>
        <dbReference type="PDB" id="4KZX"/>
    </source>
</evidence>
<evidence type="ECO:0007744" key="26">
    <source>
        <dbReference type="PDB" id="4KZY"/>
    </source>
</evidence>
<evidence type="ECO:0007744" key="27">
    <source>
        <dbReference type="PDB" id="5LZS"/>
    </source>
</evidence>
<evidence type="ECO:0007744" key="28">
    <source>
        <dbReference type="PDB" id="5LZT"/>
    </source>
</evidence>
<evidence type="ECO:0007744" key="29">
    <source>
        <dbReference type="PDB" id="6D90"/>
    </source>
</evidence>
<evidence type="ECO:0007744" key="30">
    <source>
        <dbReference type="PDB" id="6D9J"/>
    </source>
</evidence>
<evidence type="ECO:0007744" key="31">
    <source>
        <dbReference type="PDB" id="6GZ3"/>
    </source>
</evidence>
<evidence type="ECO:0007744" key="32">
    <source>
        <dbReference type="PDB" id="6HCF"/>
    </source>
</evidence>
<evidence type="ECO:0007744" key="33">
    <source>
        <dbReference type="PDB" id="6HCJ"/>
    </source>
</evidence>
<evidence type="ECO:0007744" key="34">
    <source>
        <dbReference type="PDB" id="6MTB"/>
    </source>
</evidence>
<evidence type="ECO:0007744" key="35">
    <source>
        <dbReference type="PDB" id="6MTC"/>
    </source>
</evidence>
<evidence type="ECO:0007744" key="36">
    <source>
        <dbReference type="PDB" id="6P4G"/>
    </source>
</evidence>
<evidence type="ECO:0007744" key="37">
    <source>
        <dbReference type="PDB" id="6P4H"/>
    </source>
</evidence>
<evidence type="ECO:0007744" key="38">
    <source>
        <dbReference type="PDB" id="6R5Q"/>
    </source>
</evidence>
<evidence type="ECO:0007744" key="39">
    <source>
        <dbReference type="PDB" id="6R6G"/>
    </source>
</evidence>
<evidence type="ECO:0007744" key="40">
    <source>
        <dbReference type="PDB" id="6SGC"/>
    </source>
</evidence>
<evidence type="ECO:0007744" key="41">
    <source>
        <dbReference type="PDB" id="6W2S"/>
    </source>
</evidence>
<evidence type="ECO:0007744" key="42">
    <source>
        <dbReference type="PDB" id="6W2T"/>
    </source>
</evidence>
<evidence type="ECO:0007744" key="43">
    <source>
        <dbReference type="PDB" id="6ZVK"/>
    </source>
</evidence>
<evidence type="ECO:0007744" key="44">
    <source>
        <dbReference type="PDB" id="7A01"/>
    </source>
</evidence>
<evidence type="ECO:0007744" key="45">
    <source>
        <dbReference type="PDB" id="7OYD"/>
    </source>
</evidence>
<evidence type="ECO:0007744" key="46">
    <source>
        <dbReference type="PDB" id="7SYI"/>
    </source>
</evidence>
<evidence type="ECO:0007744" key="47">
    <source>
        <dbReference type="PDB" id="7SYJ"/>
    </source>
</evidence>
<evidence type="ECO:0007744" key="48">
    <source>
        <dbReference type="PDB" id="7UCJ"/>
    </source>
</evidence>
<evidence type="ECO:0007744" key="49">
    <source>
        <dbReference type="PDB" id="7UCK"/>
    </source>
</evidence>
<evidence type="ECO:0007829" key="50">
    <source>
        <dbReference type="PDB" id="7JQB"/>
    </source>
</evidence>
<dbReference type="PDB" id="3JAG">
    <property type="method" value="EM"/>
    <property type="resolution" value="3.65 A"/>
    <property type="chains" value="cc=8-68"/>
</dbReference>
<dbReference type="PDB" id="3JAH">
    <property type="method" value="EM"/>
    <property type="resolution" value="3.45 A"/>
    <property type="chains" value="cc=8-68"/>
</dbReference>
<dbReference type="PDB" id="3JAI">
    <property type="method" value="EM"/>
    <property type="resolution" value="3.65 A"/>
    <property type="chains" value="cc=8-68"/>
</dbReference>
<dbReference type="PDB" id="4D5L">
    <property type="method" value="EM"/>
    <property type="resolution" value="9.00 A"/>
    <property type="chains" value="c=1-69"/>
</dbReference>
<dbReference type="PDB" id="4D61">
    <property type="method" value="EM"/>
    <property type="resolution" value="9.00 A"/>
    <property type="chains" value="c=1-69"/>
</dbReference>
<dbReference type="PDB" id="4KZX">
    <property type="method" value="X-ray"/>
    <property type="resolution" value="7.81 A"/>
    <property type="chains" value="c=1-69"/>
</dbReference>
<dbReference type="PDB" id="4KZY">
    <property type="method" value="X-ray"/>
    <property type="resolution" value="7.01 A"/>
    <property type="chains" value="c=1-69"/>
</dbReference>
<dbReference type="PDB" id="4KZZ">
    <property type="method" value="X-ray"/>
    <property type="resolution" value="7.03 A"/>
    <property type="chains" value="c=1-69"/>
</dbReference>
<dbReference type="PDB" id="5K0Y">
    <property type="method" value="EM"/>
    <property type="resolution" value="5.80 A"/>
    <property type="chains" value="l=5-68"/>
</dbReference>
<dbReference type="PDB" id="5LZS">
    <property type="method" value="EM"/>
    <property type="resolution" value="3.31 A"/>
    <property type="chains" value="cc=1-69"/>
</dbReference>
<dbReference type="PDB" id="5LZT">
    <property type="method" value="EM"/>
    <property type="resolution" value="3.65 A"/>
    <property type="chains" value="cc=1-69"/>
</dbReference>
<dbReference type="PDB" id="5LZU">
    <property type="method" value="EM"/>
    <property type="resolution" value="3.75 A"/>
    <property type="chains" value="cc=1-69"/>
</dbReference>
<dbReference type="PDB" id="5LZV">
    <property type="method" value="EM"/>
    <property type="resolution" value="3.35 A"/>
    <property type="chains" value="cc=1-69"/>
</dbReference>
<dbReference type="PDB" id="5LZW">
    <property type="method" value="EM"/>
    <property type="resolution" value="3.53 A"/>
    <property type="chains" value="cc=1-69"/>
</dbReference>
<dbReference type="PDB" id="5LZX">
    <property type="method" value="EM"/>
    <property type="resolution" value="3.67 A"/>
    <property type="chains" value="cc=1-69"/>
</dbReference>
<dbReference type="PDB" id="5LZY">
    <property type="method" value="EM"/>
    <property type="resolution" value="3.99 A"/>
    <property type="chains" value="cc=1-69"/>
</dbReference>
<dbReference type="PDB" id="5LZZ">
    <property type="method" value="EM"/>
    <property type="resolution" value="3.47 A"/>
    <property type="chains" value="cc=1-69"/>
</dbReference>
<dbReference type="PDB" id="6D90">
    <property type="method" value="EM"/>
    <property type="resolution" value="3.20 A"/>
    <property type="chains" value="dd=1-69"/>
</dbReference>
<dbReference type="PDB" id="6D9J">
    <property type="method" value="EM"/>
    <property type="resolution" value="3.20 A"/>
    <property type="chains" value="dd=1-69"/>
</dbReference>
<dbReference type="PDB" id="6GZ3">
    <property type="method" value="EM"/>
    <property type="resolution" value="3.60 A"/>
    <property type="chains" value="Bc=7-68"/>
</dbReference>
<dbReference type="PDB" id="6HCF">
    <property type="method" value="EM"/>
    <property type="resolution" value="3.90 A"/>
    <property type="chains" value="d1=1-69"/>
</dbReference>
<dbReference type="PDB" id="6HCJ">
    <property type="method" value="EM"/>
    <property type="resolution" value="3.80 A"/>
    <property type="chains" value="d2=1-69"/>
</dbReference>
<dbReference type="PDB" id="6HCM">
    <property type="method" value="EM"/>
    <property type="resolution" value="6.80 A"/>
    <property type="chains" value="d1=1-69"/>
</dbReference>
<dbReference type="PDB" id="6HCQ">
    <property type="method" value="EM"/>
    <property type="resolution" value="6.50 A"/>
    <property type="chains" value="d2=1-69"/>
</dbReference>
<dbReference type="PDB" id="6MTB">
    <property type="method" value="EM"/>
    <property type="resolution" value="3.60 A"/>
    <property type="chains" value="cc=7-68"/>
</dbReference>
<dbReference type="PDB" id="6MTC">
    <property type="method" value="EM"/>
    <property type="resolution" value="3.40 A"/>
    <property type="chains" value="cc=7-68"/>
</dbReference>
<dbReference type="PDB" id="6MTD">
    <property type="method" value="EM"/>
    <property type="resolution" value="3.30 A"/>
    <property type="chains" value="cc=7-68"/>
</dbReference>
<dbReference type="PDB" id="6MTE">
    <property type="method" value="EM"/>
    <property type="resolution" value="3.40 A"/>
    <property type="chains" value="cc=7-68"/>
</dbReference>
<dbReference type="PDB" id="6P4G">
    <property type="method" value="EM"/>
    <property type="resolution" value="3.10 A"/>
    <property type="chains" value="d=1-69"/>
</dbReference>
<dbReference type="PDB" id="6P4H">
    <property type="method" value="EM"/>
    <property type="resolution" value="3.20 A"/>
    <property type="chains" value="d=1-69"/>
</dbReference>
<dbReference type="PDB" id="6P5I">
    <property type="method" value="EM"/>
    <property type="resolution" value="3.10 A"/>
    <property type="chains" value="d=1-69"/>
</dbReference>
<dbReference type="PDB" id="6P5J">
    <property type="method" value="EM"/>
    <property type="resolution" value="3.10 A"/>
    <property type="chains" value="d=1-69"/>
</dbReference>
<dbReference type="PDB" id="6P5K">
    <property type="method" value="EM"/>
    <property type="resolution" value="3.10 A"/>
    <property type="chains" value="d=1-69"/>
</dbReference>
<dbReference type="PDB" id="6P5N">
    <property type="method" value="EM"/>
    <property type="resolution" value="3.20 A"/>
    <property type="chains" value="d=1-69"/>
</dbReference>
<dbReference type="PDB" id="6R5Q">
    <property type="method" value="EM"/>
    <property type="resolution" value="3.00 A"/>
    <property type="chains" value="FF=7-68"/>
</dbReference>
<dbReference type="PDB" id="6R6G">
    <property type="method" value="EM"/>
    <property type="resolution" value="3.70 A"/>
    <property type="chains" value="FF=7-68"/>
</dbReference>
<dbReference type="PDB" id="6R6P">
    <property type="method" value="EM"/>
    <property type="resolution" value="3.10 A"/>
    <property type="chains" value="FF=7-68"/>
</dbReference>
<dbReference type="PDB" id="6R7Q">
    <property type="method" value="EM"/>
    <property type="resolution" value="3.90 A"/>
    <property type="chains" value="FF=7-68"/>
</dbReference>
<dbReference type="PDB" id="6SGC">
    <property type="method" value="EM"/>
    <property type="resolution" value="2.80 A"/>
    <property type="chains" value="d1=1-69"/>
</dbReference>
<dbReference type="PDB" id="6W2S">
    <property type="method" value="EM"/>
    <property type="resolution" value="3.00 A"/>
    <property type="chains" value="d=1-69"/>
</dbReference>
<dbReference type="PDB" id="6W2T">
    <property type="method" value="EM"/>
    <property type="resolution" value="3.36 A"/>
    <property type="chains" value="d=1-69"/>
</dbReference>
<dbReference type="PDB" id="6YAL">
    <property type="method" value="EM"/>
    <property type="resolution" value="3.00 A"/>
    <property type="chains" value="d=1-69"/>
</dbReference>
<dbReference type="PDB" id="6YAM">
    <property type="method" value="EM"/>
    <property type="resolution" value="3.60 A"/>
    <property type="chains" value="d=1-69"/>
</dbReference>
<dbReference type="PDB" id="6YAN">
    <property type="method" value="EM"/>
    <property type="resolution" value="3.48 A"/>
    <property type="chains" value="d=5-68"/>
</dbReference>
<dbReference type="PDB" id="6ZVK">
    <property type="method" value="EM"/>
    <property type="resolution" value="3.49 A"/>
    <property type="chains" value="f3=5-68"/>
</dbReference>
<dbReference type="PDB" id="7A01">
    <property type="method" value="EM"/>
    <property type="resolution" value="3.60 A"/>
    <property type="chains" value="f3=5-68"/>
</dbReference>
<dbReference type="PDB" id="7JQB">
    <property type="method" value="EM"/>
    <property type="resolution" value="2.70 A"/>
    <property type="chains" value="d=1-69"/>
</dbReference>
<dbReference type="PDB" id="7JQC">
    <property type="method" value="EM"/>
    <property type="resolution" value="3.30 A"/>
    <property type="chains" value="d=1-69"/>
</dbReference>
<dbReference type="PDB" id="7MDZ">
    <property type="method" value="EM"/>
    <property type="resolution" value="3.20 A"/>
    <property type="chains" value="cc=1-69"/>
</dbReference>
<dbReference type="PDB" id="7NWG">
    <property type="method" value="EM"/>
    <property type="resolution" value="3.80 A"/>
    <property type="chains" value="d2=1-69"/>
</dbReference>
<dbReference type="PDB" id="7NWH">
    <property type="method" value="EM"/>
    <property type="resolution" value="4.10 A"/>
    <property type="chains" value="cc=1-69"/>
</dbReference>
<dbReference type="PDB" id="7NWI">
    <property type="method" value="EM"/>
    <property type="resolution" value="3.13 A"/>
    <property type="chains" value="cc=1-69"/>
</dbReference>
<dbReference type="PDB" id="7O7Y">
    <property type="method" value="EM"/>
    <property type="resolution" value="2.20 A"/>
    <property type="chains" value="AB=1-69"/>
</dbReference>
<dbReference type="PDB" id="7O7Z">
    <property type="method" value="EM"/>
    <property type="resolution" value="2.40 A"/>
    <property type="chains" value="AB=1-69"/>
</dbReference>
<dbReference type="PDB" id="7O80">
    <property type="method" value="EM"/>
    <property type="resolution" value="2.90 A"/>
    <property type="chains" value="AB=1-69"/>
</dbReference>
<dbReference type="PDB" id="7O81">
    <property type="method" value="EM"/>
    <property type="resolution" value="3.10 A"/>
    <property type="chains" value="AB=1-69"/>
</dbReference>
<dbReference type="PDB" id="7OYD">
    <property type="method" value="EM"/>
    <property type="resolution" value="2.30 A"/>
    <property type="chains" value="Cc=1-69"/>
</dbReference>
<dbReference type="PDB" id="7SYG">
    <property type="method" value="EM"/>
    <property type="resolution" value="4.30 A"/>
    <property type="chains" value="d=1-69"/>
</dbReference>
<dbReference type="PDB" id="7SYH">
    <property type="method" value="EM"/>
    <property type="resolution" value="4.60 A"/>
    <property type="chains" value="d=1-69"/>
</dbReference>
<dbReference type="PDB" id="7SYI">
    <property type="method" value="EM"/>
    <property type="resolution" value="4.50 A"/>
    <property type="chains" value="d=1-69"/>
</dbReference>
<dbReference type="PDB" id="7SYJ">
    <property type="method" value="EM"/>
    <property type="resolution" value="4.80 A"/>
    <property type="chains" value="d=1-69"/>
</dbReference>
<dbReference type="PDB" id="7SYK">
    <property type="method" value="EM"/>
    <property type="resolution" value="4.20 A"/>
    <property type="chains" value="d=1-69"/>
</dbReference>
<dbReference type="PDB" id="7SYL">
    <property type="method" value="EM"/>
    <property type="resolution" value="4.50 A"/>
    <property type="chains" value="d=1-69"/>
</dbReference>
<dbReference type="PDB" id="7SYM">
    <property type="method" value="EM"/>
    <property type="resolution" value="4.80 A"/>
    <property type="chains" value="d=1-69"/>
</dbReference>
<dbReference type="PDB" id="7SYN">
    <property type="method" value="EM"/>
    <property type="resolution" value="4.00 A"/>
    <property type="chains" value="d=1-69"/>
</dbReference>
<dbReference type="PDB" id="7SYO">
    <property type="method" value="EM"/>
    <property type="resolution" value="4.60 A"/>
    <property type="chains" value="d=1-69"/>
</dbReference>
<dbReference type="PDB" id="7SYP">
    <property type="method" value="EM"/>
    <property type="resolution" value="4.00 A"/>
    <property type="chains" value="d=1-69"/>
</dbReference>
<dbReference type="PDB" id="7SYQ">
    <property type="method" value="EM"/>
    <property type="resolution" value="3.80 A"/>
    <property type="chains" value="d=1-69"/>
</dbReference>
<dbReference type="PDB" id="7SYR">
    <property type="method" value="EM"/>
    <property type="resolution" value="3.60 A"/>
    <property type="chains" value="d=1-69"/>
</dbReference>
<dbReference type="PDB" id="7SYS">
    <property type="method" value="EM"/>
    <property type="resolution" value="3.50 A"/>
    <property type="chains" value="d=1-69"/>
</dbReference>
<dbReference type="PDB" id="7SYT">
    <property type="method" value="EM"/>
    <property type="resolution" value="4.40 A"/>
    <property type="chains" value="d=1-69"/>
</dbReference>
<dbReference type="PDB" id="7SYU">
    <property type="method" value="EM"/>
    <property type="resolution" value="4.60 A"/>
    <property type="chains" value="d=1-69"/>
</dbReference>
<dbReference type="PDB" id="7SYV">
    <property type="method" value="EM"/>
    <property type="resolution" value="3.90 A"/>
    <property type="chains" value="d=1-69"/>
</dbReference>
<dbReference type="PDB" id="7SYW">
    <property type="method" value="EM"/>
    <property type="resolution" value="3.70 A"/>
    <property type="chains" value="d=1-69"/>
</dbReference>
<dbReference type="PDB" id="7SYX">
    <property type="method" value="EM"/>
    <property type="resolution" value="3.70 A"/>
    <property type="chains" value="d=1-69"/>
</dbReference>
<dbReference type="PDB" id="7TOQ">
    <property type="method" value="EM"/>
    <property type="resolution" value="3.10 A"/>
    <property type="chains" value="AS28=7-68"/>
</dbReference>
<dbReference type="PDB" id="7TOR">
    <property type="method" value="EM"/>
    <property type="resolution" value="2.90 A"/>
    <property type="chains" value="AS28=7-68"/>
</dbReference>
<dbReference type="PDB" id="7UCJ">
    <property type="method" value="EM"/>
    <property type="resolution" value="3.10 A"/>
    <property type="chains" value="Cc=7-68"/>
</dbReference>
<dbReference type="PDB" id="7UCK">
    <property type="method" value="EM"/>
    <property type="resolution" value="2.80 A"/>
    <property type="chains" value="Cc=7-68"/>
</dbReference>
<dbReference type="PDB" id="8BHF">
    <property type="method" value="EM"/>
    <property type="resolution" value="3.10 A"/>
    <property type="chains" value="d3=7-68"/>
</dbReference>
<dbReference type="PDB" id="8BTK">
    <property type="method" value="EM"/>
    <property type="resolution" value="3.50 A"/>
    <property type="chains" value="AB=1-69"/>
</dbReference>
<dbReference type="PDB" id="8P03">
    <property type="method" value="EM"/>
    <property type="resolution" value="3.04 A"/>
    <property type="chains" value="d=1-69"/>
</dbReference>
<dbReference type="PDB" id="8P09">
    <property type="method" value="EM"/>
    <property type="resolution" value="3.30 A"/>
    <property type="chains" value="d=1-69"/>
</dbReference>
<dbReference type="PDB" id="8P2K">
    <property type="method" value="EM"/>
    <property type="resolution" value="2.90 A"/>
    <property type="chains" value="AB=1-69"/>
</dbReference>
<dbReference type="PDB" id="8SCB">
    <property type="method" value="EM"/>
    <property type="resolution" value="2.50 A"/>
    <property type="chains" value="cc=1-69"/>
</dbReference>
<dbReference type="PDB" id="8VFT">
    <property type="method" value="EM"/>
    <property type="resolution" value="3.30 A"/>
    <property type="chains" value="cc=1-69"/>
</dbReference>
<dbReference type="PDB" id="9BDL">
    <property type="method" value="EM"/>
    <property type="resolution" value="2.80 A"/>
    <property type="chains" value="AS28=7-68"/>
</dbReference>
<dbReference type="PDB" id="9BDN">
    <property type="method" value="EM"/>
    <property type="resolution" value="3.10 A"/>
    <property type="chains" value="AS28=7-68"/>
</dbReference>
<dbReference type="PDB" id="9BDP">
    <property type="method" value="EM"/>
    <property type="resolution" value="3.70 A"/>
    <property type="chains" value="AS28=7-68"/>
</dbReference>
<dbReference type="PDB" id="9C8K">
    <property type="method" value="EM"/>
    <property type="resolution" value="3.10 A"/>
    <property type="chains" value="c=1-69"/>
</dbReference>
<dbReference type="PDB" id="9F1B">
    <property type="method" value="EM"/>
    <property type="resolution" value="3.01 A"/>
    <property type="chains" value="AB=1-69"/>
</dbReference>
<dbReference type="PDB" id="9F1C">
    <property type="method" value="EM"/>
    <property type="resolution" value="3.78 A"/>
    <property type="chains" value="AB=1-69"/>
</dbReference>
<dbReference type="PDB" id="9F1D">
    <property type="method" value="EM"/>
    <property type="resolution" value="3.26 A"/>
    <property type="chains" value="AB=1-69"/>
</dbReference>
<dbReference type="PDBsum" id="3JAG"/>
<dbReference type="PDBsum" id="3JAH"/>
<dbReference type="PDBsum" id="3JAI"/>
<dbReference type="PDBsum" id="4D5L"/>
<dbReference type="PDBsum" id="4D61"/>
<dbReference type="PDBsum" id="4KZX"/>
<dbReference type="PDBsum" id="4KZY"/>
<dbReference type="PDBsum" id="4KZZ"/>
<dbReference type="PDBsum" id="5K0Y"/>
<dbReference type="PDBsum" id="5LZS"/>
<dbReference type="PDBsum" id="5LZT"/>
<dbReference type="PDBsum" id="5LZU"/>
<dbReference type="PDBsum" id="5LZV"/>
<dbReference type="PDBsum" id="5LZW"/>
<dbReference type="PDBsum" id="5LZX"/>
<dbReference type="PDBsum" id="5LZY"/>
<dbReference type="PDBsum" id="5LZZ"/>
<dbReference type="PDBsum" id="6D90"/>
<dbReference type="PDBsum" id="6D9J"/>
<dbReference type="PDBsum" id="6GZ3"/>
<dbReference type="PDBsum" id="6HCF"/>
<dbReference type="PDBsum" id="6HCJ"/>
<dbReference type="PDBsum" id="6HCM"/>
<dbReference type="PDBsum" id="6HCQ"/>
<dbReference type="PDBsum" id="6MTB"/>
<dbReference type="PDBsum" id="6MTC"/>
<dbReference type="PDBsum" id="6MTD"/>
<dbReference type="PDBsum" id="6MTE"/>
<dbReference type="PDBsum" id="6P4G"/>
<dbReference type="PDBsum" id="6P4H"/>
<dbReference type="PDBsum" id="6P5I"/>
<dbReference type="PDBsum" id="6P5J"/>
<dbReference type="PDBsum" id="6P5K"/>
<dbReference type="PDBsum" id="6P5N"/>
<dbReference type="PDBsum" id="6R5Q"/>
<dbReference type="PDBsum" id="6R6G"/>
<dbReference type="PDBsum" id="6R6P"/>
<dbReference type="PDBsum" id="6R7Q"/>
<dbReference type="PDBsum" id="6SGC"/>
<dbReference type="PDBsum" id="6W2S"/>
<dbReference type="PDBsum" id="6W2T"/>
<dbReference type="PDBsum" id="6YAL"/>
<dbReference type="PDBsum" id="6YAM"/>
<dbReference type="PDBsum" id="6YAN"/>
<dbReference type="PDBsum" id="6ZVK"/>
<dbReference type="PDBsum" id="7A01"/>
<dbReference type="PDBsum" id="7JQB"/>
<dbReference type="PDBsum" id="7JQC"/>
<dbReference type="PDBsum" id="7MDZ"/>
<dbReference type="PDBsum" id="7NWG"/>
<dbReference type="PDBsum" id="7NWH"/>
<dbReference type="PDBsum" id="7NWI"/>
<dbReference type="PDBsum" id="7O7Y"/>
<dbReference type="PDBsum" id="7O7Z"/>
<dbReference type="PDBsum" id="7O80"/>
<dbReference type="PDBsum" id="7O81"/>
<dbReference type="PDBsum" id="7OYD"/>
<dbReference type="PDBsum" id="7SYG"/>
<dbReference type="PDBsum" id="7SYH"/>
<dbReference type="PDBsum" id="7SYI"/>
<dbReference type="PDBsum" id="7SYJ"/>
<dbReference type="PDBsum" id="7SYK"/>
<dbReference type="PDBsum" id="7SYL"/>
<dbReference type="PDBsum" id="7SYM"/>
<dbReference type="PDBsum" id="7SYN"/>
<dbReference type="PDBsum" id="7SYO"/>
<dbReference type="PDBsum" id="7SYP"/>
<dbReference type="PDBsum" id="7SYQ"/>
<dbReference type="PDBsum" id="7SYR"/>
<dbReference type="PDBsum" id="7SYS"/>
<dbReference type="PDBsum" id="7SYT"/>
<dbReference type="PDBsum" id="7SYU"/>
<dbReference type="PDBsum" id="7SYV"/>
<dbReference type="PDBsum" id="7SYW"/>
<dbReference type="PDBsum" id="7SYX"/>
<dbReference type="PDBsum" id="7TOQ"/>
<dbReference type="PDBsum" id="7TOR"/>
<dbReference type="PDBsum" id="7UCJ"/>
<dbReference type="PDBsum" id="7UCK"/>
<dbReference type="PDBsum" id="8BHF"/>
<dbReference type="PDBsum" id="8BTK"/>
<dbReference type="PDBsum" id="8P03"/>
<dbReference type="PDBsum" id="8P09"/>
<dbReference type="PDBsum" id="8P2K"/>
<dbReference type="PDBsum" id="8SCB"/>
<dbReference type="PDBsum" id="8VFT"/>
<dbReference type="PDBsum" id="9BDL"/>
<dbReference type="PDBsum" id="9BDN"/>
<dbReference type="PDBsum" id="9BDP"/>
<dbReference type="PDBsum" id="9C8K"/>
<dbReference type="PDBsum" id="9F1B"/>
<dbReference type="PDBsum" id="9F1C"/>
<dbReference type="PDBsum" id="9F1D"/>
<dbReference type="EMDB" id="EMD-0098"/>
<dbReference type="EMDB" id="EMD-0192"/>
<dbReference type="EMDB" id="EMD-0194"/>
<dbReference type="EMDB" id="EMD-0195"/>
<dbReference type="EMDB" id="EMD-0197"/>
<dbReference type="EMDB" id="EMD-10181"/>
<dbReference type="EMDB" id="EMD-10760"/>
<dbReference type="EMDB" id="EMD-10761"/>
<dbReference type="EMDB" id="EMD-10762"/>
<dbReference type="EMDB" id="EMD-11459"/>
<dbReference type="EMDB" id="EMD-11590"/>
<dbReference type="EMDB" id="EMD-12631"/>
<dbReference type="EMDB" id="EMD-12632"/>
<dbReference type="EMDB" id="EMD-12633"/>
<dbReference type="EMDB" id="EMD-12756"/>
<dbReference type="EMDB" id="EMD-12757"/>
<dbReference type="EMDB" id="EMD-12758"/>
<dbReference type="EMDB" id="EMD-12759"/>
<dbReference type="EMDB" id="EMD-13114"/>
<dbReference type="EMDB" id="EMD-16052"/>
<dbReference type="EMDB" id="EMD-16232"/>
<dbReference type="EMDB" id="EMD-17329"/>
<dbReference type="EMDB" id="EMD-17330"/>
<dbReference type="EMDB" id="EMD-17367"/>
<dbReference type="EMDB" id="EMD-20248"/>
<dbReference type="EMDB" id="EMD-20249"/>
<dbReference type="EMDB" id="EMD-20255"/>
<dbReference type="EMDB" id="EMD-20256"/>
<dbReference type="EMDB" id="EMD-20257"/>
<dbReference type="EMDB" id="EMD-20258"/>
<dbReference type="EMDB" id="EMD-21529"/>
<dbReference type="EMDB" id="EMD-21530"/>
<dbReference type="EMDB" id="EMD-22432"/>
<dbReference type="EMDB" id="EMD-22433"/>
<dbReference type="EMDB" id="EMD-23785"/>
<dbReference type="EMDB" id="EMD-25527"/>
<dbReference type="EMDB" id="EMD-25528"/>
<dbReference type="EMDB" id="EMD-25529"/>
<dbReference type="EMDB" id="EMD-25530"/>
<dbReference type="EMDB" id="EMD-25531"/>
<dbReference type="EMDB" id="EMD-25532"/>
<dbReference type="EMDB" id="EMD-25533"/>
<dbReference type="EMDB" id="EMD-25534"/>
<dbReference type="EMDB" id="EMD-25535"/>
<dbReference type="EMDB" id="EMD-25536"/>
<dbReference type="EMDB" id="EMD-25537"/>
<dbReference type="EMDB" id="EMD-25538"/>
<dbReference type="EMDB" id="EMD-25539"/>
<dbReference type="EMDB" id="EMD-25540"/>
<dbReference type="EMDB" id="EMD-25541"/>
<dbReference type="EMDB" id="EMD-25542"/>
<dbReference type="EMDB" id="EMD-25543"/>
<dbReference type="EMDB" id="EMD-25544"/>
<dbReference type="EMDB" id="EMD-26035"/>
<dbReference type="EMDB" id="EMD-26036"/>
<dbReference type="EMDB" id="EMD-26444"/>
<dbReference type="EMDB" id="EMD-26445"/>
<dbReference type="EMDB" id="EMD-40344"/>
<dbReference type="EMDB" id="EMD-4130"/>
<dbReference type="EMDB" id="EMD-4131"/>
<dbReference type="EMDB" id="EMD-4132"/>
<dbReference type="EMDB" id="EMD-4133"/>
<dbReference type="EMDB" id="EMD-4134"/>
<dbReference type="EMDB" id="EMD-4135"/>
<dbReference type="EMDB" id="EMD-4136"/>
<dbReference type="EMDB" id="EMD-4137"/>
<dbReference type="EMDB" id="EMD-43189"/>
<dbReference type="EMDB" id="EMD-44461"/>
<dbReference type="EMDB" id="EMD-44463"/>
<dbReference type="EMDB" id="EMD-44464"/>
<dbReference type="EMDB" id="EMD-45307"/>
<dbReference type="EMDB" id="EMD-4729"/>
<dbReference type="EMDB" id="EMD-4735"/>
<dbReference type="EMDB" id="EMD-4737"/>
<dbReference type="EMDB" id="EMD-4745"/>
<dbReference type="EMDB" id="EMD-50124"/>
<dbReference type="EMDB" id="EMD-50125"/>
<dbReference type="EMDB" id="EMD-50126"/>
<dbReference type="EMDB" id="EMD-7834"/>
<dbReference type="EMDB" id="EMD-7836"/>
<dbReference type="EMDB" id="EMD-8190"/>
<dbReference type="EMDB" id="EMD-9237"/>
<dbReference type="EMDB" id="EMD-9239"/>
<dbReference type="EMDB" id="EMD-9240"/>
<dbReference type="EMDB" id="EMD-9242"/>
<dbReference type="SMR" id="G1TIB4"/>
<dbReference type="FunCoup" id="G1TIB4">
    <property type="interactions" value="1125"/>
</dbReference>
<dbReference type="IntAct" id="G1TIB4">
    <property type="interactions" value="1"/>
</dbReference>
<dbReference type="STRING" id="9986.ENSOCUP00000016683"/>
<dbReference type="PaxDb" id="9986-ENSOCUP00000016683"/>
<dbReference type="Ensembl" id="ENSOCUT00000030802.1">
    <property type="protein sequence ID" value="ENSOCUP00000016683.1"/>
    <property type="gene ID" value="ENSOCUG00000021484.1"/>
</dbReference>
<dbReference type="eggNOG" id="KOG3502">
    <property type="taxonomic scope" value="Eukaryota"/>
</dbReference>
<dbReference type="GeneTree" id="ENSGT00910000144227"/>
<dbReference type="HOGENOM" id="CLU_178987_1_0_1"/>
<dbReference type="InParanoid" id="G1TIB4"/>
<dbReference type="OMA" id="NTGMHGE"/>
<dbReference type="TreeFam" id="TF300136"/>
<dbReference type="EvolutionaryTrace" id="G1TIB4"/>
<dbReference type="Proteomes" id="UP000001811">
    <property type="component" value="Unplaced"/>
</dbReference>
<dbReference type="Bgee" id="ENSOCUG00000021484">
    <property type="expression patterns" value="Expressed in uterus and 18 other cell types or tissues"/>
</dbReference>
<dbReference type="GO" id="GO:0022626">
    <property type="term" value="C:cytosolic ribosome"/>
    <property type="evidence" value="ECO:0000314"/>
    <property type="project" value="UniProtKB"/>
</dbReference>
<dbReference type="GO" id="GO:0022627">
    <property type="term" value="C:cytosolic small ribosomal subunit"/>
    <property type="evidence" value="ECO:0007669"/>
    <property type="project" value="Ensembl"/>
</dbReference>
<dbReference type="GO" id="GO:0005730">
    <property type="term" value="C:nucleolus"/>
    <property type="evidence" value="ECO:0007669"/>
    <property type="project" value="UniProtKB-SubCell"/>
</dbReference>
<dbReference type="GO" id="GO:0005791">
    <property type="term" value="C:rough endoplasmic reticulum"/>
    <property type="evidence" value="ECO:0007669"/>
    <property type="project" value="UniProtKB-SubCell"/>
</dbReference>
<dbReference type="GO" id="GO:0032040">
    <property type="term" value="C:small-subunit processome"/>
    <property type="evidence" value="ECO:0007669"/>
    <property type="project" value="Ensembl"/>
</dbReference>
<dbReference type="GO" id="GO:0045202">
    <property type="term" value="C:synapse"/>
    <property type="evidence" value="ECO:0007669"/>
    <property type="project" value="Ensembl"/>
</dbReference>
<dbReference type="GO" id="GO:0003735">
    <property type="term" value="F:structural constituent of ribosome"/>
    <property type="evidence" value="ECO:0000314"/>
    <property type="project" value="UniProtKB"/>
</dbReference>
<dbReference type="GO" id="GO:0002181">
    <property type="term" value="P:cytoplasmic translation"/>
    <property type="evidence" value="ECO:0007669"/>
    <property type="project" value="Ensembl"/>
</dbReference>
<dbReference type="GO" id="GO:0030490">
    <property type="term" value="P:maturation of SSU-rRNA"/>
    <property type="evidence" value="ECO:0007669"/>
    <property type="project" value="TreeGrafter"/>
</dbReference>
<dbReference type="GO" id="GO:0000028">
    <property type="term" value="P:ribosomal small subunit assembly"/>
    <property type="evidence" value="ECO:0007669"/>
    <property type="project" value="TreeGrafter"/>
</dbReference>
<dbReference type="CDD" id="cd04457">
    <property type="entry name" value="S1_S28E"/>
    <property type="match status" value="1"/>
</dbReference>
<dbReference type="FunFam" id="2.40.50.140:FF:000025">
    <property type="entry name" value="40S ribosomal protein S28"/>
    <property type="match status" value="1"/>
</dbReference>
<dbReference type="Gene3D" id="2.40.50.140">
    <property type="entry name" value="Nucleic acid-binding proteins"/>
    <property type="match status" value="1"/>
</dbReference>
<dbReference type="HAMAP" id="MF_00292">
    <property type="entry name" value="Ribosomal_eS28"/>
    <property type="match status" value="1"/>
</dbReference>
<dbReference type="InterPro" id="IPR012340">
    <property type="entry name" value="NA-bd_OB-fold"/>
</dbReference>
<dbReference type="InterPro" id="IPR000289">
    <property type="entry name" value="Ribosomal_eS28"/>
</dbReference>
<dbReference type="InterPro" id="IPR028626">
    <property type="entry name" value="Ribosomal_eS28_CS"/>
</dbReference>
<dbReference type="PANTHER" id="PTHR10769">
    <property type="entry name" value="40S RIBOSOMAL PROTEIN S28"/>
    <property type="match status" value="1"/>
</dbReference>
<dbReference type="PANTHER" id="PTHR10769:SF3">
    <property type="entry name" value="SMALL RIBOSOMAL SUBUNIT PROTEIN ES28"/>
    <property type="match status" value="1"/>
</dbReference>
<dbReference type="Pfam" id="PF01200">
    <property type="entry name" value="Ribosomal_S28e"/>
    <property type="match status" value="1"/>
</dbReference>
<dbReference type="SUPFAM" id="SSF50249">
    <property type="entry name" value="Nucleic acid-binding proteins"/>
    <property type="match status" value="1"/>
</dbReference>
<dbReference type="PROSITE" id="PS00961">
    <property type="entry name" value="RIBOSOMAL_S28E"/>
    <property type="match status" value="1"/>
</dbReference>